<organism>
    <name type="scientific">Chromohalobacter salexigens (strain ATCC BAA-138 / DSM 3043 / CIP 106854 / NCIMB 13768 / 1H11)</name>
    <dbReference type="NCBI Taxonomy" id="290398"/>
    <lineage>
        <taxon>Bacteria</taxon>
        <taxon>Pseudomonadati</taxon>
        <taxon>Pseudomonadota</taxon>
        <taxon>Gammaproteobacteria</taxon>
        <taxon>Oceanospirillales</taxon>
        <taxon>Halomonadaceae</taxon>
        <taxon>Chromohalobacter</taxon>
    </lineage>
</organism>
<gene>
    <name evidence="1" type="primary">rplQ</name>
    <name type="ordered locus">Csal_0447</name>
</gene>
<comment type="subunit">
    <text evidence="1">Part of the 50S ribosomal subunit. Contacts protein L32.</text>
</comment>
<comment type="similarity">
    <text evidence="1">Belongs to the bacterial ribosomal protein bL17 family.</text>
</comment>
<accession>Q1R0E9</accession>
<reference key="1">
    <citation type="journal article" date="2011" name="Stand. Genomic Sci.">
        <title>Complete genome sequence of the halophilic and highly halotolerant Chromohalobacter salexigens type strain (1H11(T)).</title>
        <authorList>
            <person name="Copeland A."/>
            <person name="O'Connor K."/>
            <person name="Lucas S."/>
            <person name="Lapidus A."/>
            <person name="Berry K.W."/>
            <person name="Detter J.C."/>
            <person name="Del Rio T.G."/>
            <person name="Hammon N."/>
            <person name="Dalin E."/>
            <person name="Tice H."/>
            <person name="Pitluck S."/>
            <person name="Bruce D."/>
            <person name="Goodwin L."/>
            <person name="Han C."/>
            <person name="Tapia R."/>
            <person name="Saunders E."/>
            <person name="Schmutz J."/>
            <person name="Brettin T."/>
            <person name="Larimer F."/>
            <person name="Land M."/>
            <person name="Hauser L."/>
            <person name="Vargas C."/>
            <person name="Nieto J.J."/>
            <person name="Kyrpides N.C."/>
            <person name="Ivanova N."/>
            <person name="Goker M."/>
            <person name="Klenk H.P."/>
            <person name="Csonka L.N."/>
            <person name="Woyke T."/>
        </authorList>
    </citation>
    <scope>NUCLEOTIDE SEQUENCE [LARGE SCALE GENOMIC DNA]</scope>
    <source>
        <strain>ATCC BAA-138 / DSM 3043 / CIP 106854 / NCIMB 13768 / 1H11</strain>
    </source>
</reference>
<sequence>MRHRKSGRHLNRTSSHRHAMFKNMCVSLVEHEVIKTTLPKAKELRRHIEPLITLAKQDSVANRRLAFNRTRSKEAVGKLFNELGPRYVERPGGYVRILKCGFRAGDNAPMAYVELVDRPVVEEAAEE</sequence>
<protein>
    <recommendedName>
        <fullName evidence="1">Large ribosomal subunit protein bL17</fullName>
    </recommendedName>
    <alternativeName>
        <fullName evidence="2">50S ribosomal protein L17</fullName>
    </alternativeName>
</protein>
<proteinExistence type="inferred from homology"/>
<keyword id="KW-1185">Reference proteome</keyword>
<keyword id="KW-0687">Ribonucleoprotein</keyword>
<keyword id="KW-0689">Ribosomal protein</keyword>
<feature type="chain" id="PRO_0000267854" description="Large ribosomal subunit protein bL17">
    <location>
        <begin position="1"/>
        <end position="127"/>
    </location>
</feature>
<dbReference type="EMBL" id="CP000285">
    <property type="protein sequence ID" value="ABE57809.1"/>
    <property type="molecule type" value="Genomic_DNA"/>
</dbReference>
<dbReference type="RefSeq" id="WP_011505755.1">
    <property type="nucleotide sequence ID" value="NC_007963.1"/>
</dbReference>
<dbReference type="SMR" id="Q1R0E9"/>
<dbReference type="STRING" id="290398.Csal_0447"/>
<dbReference type="GeneID" id="95333199"/>
<dbReference type="KEGG" id="csa:Csal_0447"/>
<dbReference type="eggNOG" id="COG0203">
    <property type="taxonomic scope" value="Bacteria"/>
</dbReference>
<dbReference type="HOGENOM" id="CLU_074407_2_0_6"/>
<dbReference type="OrthoDB" id="9809073at2"/>
<dbReference type="Proteomes" id="UP000000239">
    <property type="component" value="Chromosome"/>
</dbReference>
<dbReference type="GO" id="GO:0022625">
    <property type="term" value="C:cytosolic large ribosomal subunit"/>
    <property type="evidence" value="ECO:0007669"/>
    <property type="project" value="TreeGrafter"/>
</dbReference>
<dbReference type="GO" id="GO:0003735">
    <property type="term" value="F:structural constituent of ribosome"/>
    <property type="evidence" value="ECO:0007669"/>
    <property type="project" value="InterPro"/>
</dbReference>
<dbReference type="GO" id="GO:0006412">
    <property type="term" value="P:translation"/>
    <property type="evidence" value="ECO:0007669"/>
    <property type="project" value="UniProtKB-UniRule"/>
</dbReference>
<dbReference type="FunFam" id="3.90.1030.10:FF:000001">
    <property type="entry name" value="50S ribosomal protein L17"/>
    <property type="match status" value="1"/>
</dbReference>
<dbReference type="Gene3D" id="3.90.1030.10">
    <property type="entry name" value="Ribosomal protein L17"/>
    <property type="match status" value="1"/>
</dbReference>
<dbReference type="HAMAP" id="MF_01368">
    <property type="entry name" value="Ribosomal_bL17"/>
    <property type="match status" value="1"/>
</dbReference>
<dbReference type="InterPro" id="IPR000456">
    <property type="entry name" value="Ribosomal_bL17"/>
</dbReference>
<dbReference type="InterPro" id="IPR047859">
    <property type="entry name" value="Ribosomal_bL17_CS"/>
</dbReference>
<dbReference type="InterPro" id="IPR036373">
    <property type="entry name" value="Ribosomal_bL17_sf"/>
</dbReference>
<dbReference type="NCBIfam" id="TIGR00059">
    <property type="entry name" value="L17"/>
    <property type="match status" value="1"/>
</dbReference>
<dbReference type="PANTHER" id="PTHR14413:SF16">
    <property type="entry name" value="LARGE RIBOSOMAL SUBUNIT PROTEIN BL17M"/>
    <property type="match status" value="1"/>
</dbReference>
<dbReference type="PANTHER" id="PTHR14413">
    <property type="entry name" value="RIBOSOMAL PROTEIN L17"/>
    <property type="match status" value="1"/>
</dbReference>
<dbReference type="Pfam" id="PF01196">
    <property type="entry name" value="Ribosomal_L17"/>
    <property type="match status" value="1"/>
</dbReference>
<dbReference type="SUPFAM" id="SSF64263">
    <property type="entry name" value="Prokaryotic ribosomal protein L17"/>
    <property type="match status" value="1"/>
</dbReference>
<dbReference type="PROSITE" id="PS01167">
    <property type="entry name" value="RIBOSOMAL_L17"/>
    <property type="match status" value="1"/>
</dbReference>
<evidence type="ECO:0000255" key="1">
    <source>
        <dbReference type="HAMAP-Rule" id="MF_01368"/>
    </source>
</evidence>
<evidence type="ECO:0000305" key="2"/>
<name>RL17_CHRSD</name>